<organism>
    <name type="scientific">Homo sapiens</name>
    <name type="common">Human</name>
    <dbReference type="NCBI Taxonomy" id="9606"/>
    <lineage>
        <taxon>Eukaryota</taxon>
        <taxon>Metazoa</taxon>
        <taxon>Chordata</taxon>
        <taxon>Craniata</taxon>
        <taxon>Vertebrata</taxon>
        <taxon>Euteleostomi</taxon>
        <taxon>Mammalia</taxon>
        <taxon>Eutheria</taxon>
        <taxon>Euarchontoglires</taxon>
        <taxon>Primates</taxon>
        <taxon>Haplorrhini</taxon>
        <taxon>Catarrhini</taxon>
        <taxon>Hominidae</taxon>
        <taxon>Homo</taxon>
    </lineage>
</organism>
<feature type="chain" id="PRO_0000318159" description="N-acyl-phosphatidylethanolamine-hydrolyzing phospholipase D">
    <location>
        <begin position="1"/>
        <end position="393"/>
    </location>
</feature>
<feature type="region of interest" description="Disordered" evidence="3">
    <location>
        <begin position="1"/>
        <end position="40"/>
    </location>
</feature>
<feature type="compositionally biased region" description="Polar residues" evidence="3">
    <location>
        <begin position="1"/>
        <end position="16"/>
    </location>
</feature>
<feature type="binding site" evidence="8">
    <location>
        <position position="185"/>
    </location>
    <ligand>
        <name>Zn(2+)</name>
        <dbReference type="ChEBI" id="CHEBI:29105"/>
        <label>1</label>
    </ligand>
</feature>
<feature type="binding site" evidence="8">
    <location>
        <position position="187"/>
    </location>
    <ligand>
        <name>Zn(2+)</name>
        <dbReference type="ChEBI" id="CHEBI:29105"/>
        <label>1</label>
    </ligand>
</feature>
<feature type="binding site" evidence="15">
    <location>
        <position position="188"/>
    </location>
    <ligand>
        <name>an N-acyl-1,2-diacyl-sn-glycero-3-phosphoethanolamine</name>
        <dbReference type="ChEBI" id="CHEBI:62537"/>
    </ligand>
</feature>
<feature type="binding site" evidence="8">
    <location>
        <position position="189"/>
    </location>
    <ligand>
        <name>Zn(2+)</name>
        <dbReference type="ChEBI" id="CHEBI:29105"/>
        <label>2</label>
    </ligand>
</feature>
<feature type="binding site" evidence="8">
    <location>
        <position position="190"/>
    </location>
    <ligand>
        <name>Zn(2+)</name>
        <dbReference type="ChEBI" id="CHEBI:29105"/>
        <label>2</label>
    </ligand>
</feature>
<feature type="binding site" evidence="8">
    <location>
        <position position="253"/>
    </location>
    <ligand>
        <name>Zn(2+)</name>
        <dbReference type="ChEBI" id="CHEBI:29105"/>
        <label>1</label>
    </ligand>
</feature>
<feature type="binding site" evidence="8 17">
    <location>
        <position position="256"/>
    </location>
    <ligand>
        <name>deoxycholate</name>
        <dbReference type="ChEBI" id="CHEBI:23614"/>
    </ligand>
</feature>
<feature type="binding site" evidence="8 17">
    <location>
        <position position="260"/>
    </location>
    <ligand>
        <name>deoxycholate</name>
        <dbReference type="ChEBI" id="CHEBI:23614"/>
    </ligand>
</feature>
<feature type="binding site" evidence="8">
    <location>
        <position position="284"/>
    </location>
    <ligand>
        <name>Zn(2+)</name>
        <dbReference type="ChEBI" id="CHEBI:29105"/>
        <label>1</label>
    </ligand>
</feature>
<feature type="binding site" evidence="8">
    <location>
        <position position="284"/>
    </location>
    <ligand>
        <name>Zn(2+)</name>
        <dbReference type="ChEBI" id="CHEBI:29105"/>
        <label>2</label>
    </ligand>
</feature>
<feature type="binding site" evidence="15">
    <location>
        <position position="321"/>
    </location>
    <ligand>
        <name>an N-acyl-1,2-diacyl-sn-glycero-3-phosphoethanolamine</name>
        <dbReference type="ChEBI" id="CHEBI:62537"/>
    </ligand>
</feature>
<feature type="binding site" evidence="8">
    <location>
        <position position="343"/>
    </location>
    <ligand>
        <name>Zn(2+)</name>
        <dbReference type="ChEBI" id="CHEBI:29105"/>
        <label>2</label>
    </ligand>
</feature>
<feature type="binding site" evidence="8 17">
    <location>
        <position position="348"/>
    </location>
    <ligand>
        <name>deoxycholate</name>
        <dbReference type="ChEBI" id="CHEBI:23614"/>
    </ligand>
</feature>
<feature type="modified residue" description="N-acetylmethionine" evidence="18">
    <location>
        <position position="1"/>
    </location>
</feature>
<feature type="sequence variant" id="VAR_038695" description="Almost no change in activity; dbSNP:rs12540583." evidence="6">
    <original>S</original>
    <variation>A</variation>
    <location>
        <position position="152"/>
    </location>
</feature>
<feature type="sequence variant" id="VAR_038694" description="Almost no change in activity; dbSNP:rs3181009." evidence="5 6 7 10">
    <original>D</original>
    <variation>N</variation>
    <location>
        <position position="389"/>
    </location>
</feature>
<feature type="mutagenesis site" description="Impairs homodimerization resulting in loss of activity; when associated with S-159." evidence="8">
    <original>Q</original>
    <variation>S</variation>
    <location>
        <position position="158"/>
    </location>
</feature>
<feature type="mutagenesis site" description="Impairs homodimerization resulting in loss of activity; when associated with S-158." evidence="8">
    <original>Y</original>
    <variation>S</variation>
    <location>
        <position position="159"/>
    </location>
</feature>
<feature type="mutagenesis site" description="Loss of activity." evidence="6">
    <original>L</original>
    <variation>F</variation>
    <location>
        <position position="207"/>
    </location>
</feature>
<feature type="mutagenesis site" description="Impairs binding to bile acids resulting in loss of activity." evidence="8">
    <original>R</original>
    <variation>A</variation>
    <location>
        <position position="257"/>
    </location>
</feature>
<feature type="mutagenesis site" description="Loss of activity." evidence="6">
    <original>H</original>
    <variation>R</variation>
    <location>
        <position position="380"/>
    </location>
</feature>
<feature type="sequence conflict" description="In Ref. 3; CAI56779." evidence="12" ref="3">
    <location>
        <position position="281"/>
    </location>
</feature>
<feature type="sequence conflict" description="In Ref. 3; CAI56779." evidence="12" ref="3">
    <original>N</original>
    <variation>Y</variation>
    <location>
        <position position="371"/>
    </location>
</feature>
<feature type="strand" evidence="19">
    <location>
        <begin position="65"/>
        <end position="68"/>
    </location>
</feature>
<feature type="strand" evidence="20">
    <location>
        <begin position="83"/>
        <end position="87"/>
    </location>
</feature>
<feature type="helix" evidence="19">
    <location>
        <begin position="97"/>
        <end position="103"/>
    </location>
</feature>
<feature type="turn" evidence="19">
    <location>
        <begin position="110"/>
        <end position="113"/>
    </location>
</feature>
<feature type="strand" evidence="19">
    <location>
        <begin position="121"/>
        <end position="123"/>
    </location>
</feature>
<feature type="strand" evidence="19">
    <location>
        <begin position="126"/>
        <end position="129"/>
    </location>
</feature>
<feature type="strand" evidence="19">
    <location>
        <begin position="135"/>
        <end position="139"/>
    </location>
</feature>
<feature type="strand" evidence="19">
    <location>
        <begin position="142"/>
        <end position="147"/>
    </location>
</feature>
<feature type="strand" evidence="19">
    <location>
        <begin position="151"/>
        <end position="153"/>
    </location>
</feature>
<feature type="strand" evidence="19">
    <location>
        <begin position="158"/>
        <end position="161"/>
    </location>
</feature>
<feature type="turn" evidence="20">
    <location>
        <begin position="172"/>
        <end position="174"/>
    </location>
</feature>
<feature type="strand" evidence="19">
    <location>
        <begin position="178"/>
        <end position="182"/>
    </location>
</feature>
<feature type="turn" evidence="19">
    <location>
        <begin position="188"/>
        <end position="190"/>
    </location>
</feature>
<feature type="helix" evidence="19">
    <location>
        <begin position="193"/>
        <end position="202"/>
    </location>
</feature>
<feature type="strand" evidence="19">
    <location>
        <begin position="207"/>
        <end position="212"/>
    </location>
</feature>
<feature type="helix" evidence="19">
    <location>
        <begin position="216"/>
        <end position="221"/>
    </location>
</feature>
<feature type="strand" evidence="19">
    <location>
        <begin position="226"/>
        <end position="230"/>
    </location>
</feature>
<feature type="strand" evidence="19">
    <location>
        <begin position="235"/>
        <end position="238"/>
    </location>
</feature>
<feature type="strand" evidence="19">
    <location>
        <begin position="241"/>
        <end position="249"/>
    </location>
</feature>
<feature type="strand" evidence="19">
    <location>
        <begin position="257"/>
        <end position="260"/>
    </location>
</feature>
<feature type="strand" evidence="19">
    <location>
        <begin position="269"/>
        <end position="273"/>
    </location>
</feature>
<feature type="strand" evidence="19">
    <location>
        <begin position="278"/>
        <end position="281"/>
    </location>
</feature>
<feature type="helix" evidence="19">
    <location>
        <begin position="291"/>
        <end position="297"/>
    </location>
</feature>
<feature type="strand" evidence="19">
    <location>
        <begin position="301"/>
        <end position="307"/>
    </location>
</feature>
<feature type="helix" evidence="19">
    <location>
        <begin position="314"/>
        <end position="317"/>
    </location>
</feature>
<feature type="turn" evidence="19">
    <location>
        <begin position="318"/>
        <end position="320"/>
    </location>
</feature>
<feature type="helix" evidence="19">
    <location>
        <begin position="324"/>
        <end position="333"/>
    </location>
</feature>
<feature type="strand" evidence="19">
    <location>
        <begin position="339"/>
        <end position="347"/>
    </location>
</feature>
<feature type="strand" evidence="19">
    <location>
        <begin position="350"/>
        <end position="352"/>
    </location>
</feature>
<feature type="helix" evidence="19">
    <location>
        <begin position="356"/>
        <end position="368"/>
    </location>
</feature>
<feature type="turn" evidence="19">
    <location>
        <begin position="372"/>
        <end position="374"/>
    </location>
</feature>
<feature type="strand" evidence="19">
    <location>
        <begin position="383"/>
        <end position="385"/>
    </location>
</feature>
<gene>
    <name type="primary">NAPEPLD</name>
    <name type="synonym">C7orf18</name>
</gene>
<dbReference type="EC" id="3.1.4.54" evidence="4 6 8"/>
<dbReference type="EMBL" id="AY357337">
    <property type="protein sequence ID" value="AAR13673.1"/>
    <property type="molecule type" value="mRNA"/>
</dbReference>
<dbReference type="EMBL" id="AB112352">
    <property type="protein sequence ID" value="BAD02399.1"/>
    <property type="molecule type" value="mRNA"/>
</dbReference>
<dbReference type="EMBL" id="CR936639">
    <property type="protein sequence ID" value="CAI56779.1"/>
    <property type="molecule type" value="mRNA"/>
</dbReference>
<dbReference type="EMBL" id="CH471070">
    <property type="protein sequence ID" value="EAW83314.1"/>
    <property type="molecule type" value="Genomic_DNA"/>
</dbReference>
<dbReference type="EMBL" id="BC071604">
    <property type="protein sequence ID" value="AAH71604.1"/>
    <property type="molecule type" value="mRNA"/>
</dbReference>
<dbReference type="CCDS" id="CCDS5729.1"/>
<dbReference type="RefSeq" id="NP_001116310.1">
    <property type="nucleotide sequence ID" value="NM_001122838.3"/>
</dbReference>
<dbReference type="RefSeq" id="NP_001373105.1">
    <property type="nucleotide sequence ID" value="NM_001386176.1"/>
</dbReference>
<dbReference type="RefSeq" id="NP_001373106.1">
    <property type="nucleotide sequence ID" value="NM_001386177.1"/>
</dbReference>
<dbReference type="RefSeq" id="NP_001373108.1">
    <property type="nucleotide sequence ID" value="NM_001386179.1"/>
</dbReference>
<dbReference type="RefSeq" id="NP_001373111.1">
    <property type="nucleotide sequence ID" value="NM_001386182.1"/>
</dbReference>
<dbReference type="RefSeq" id="NP_001373114.1">
    <property type="nucleotide sequence ID" value="NM_001386185.1"/>
</dbReference>
<dbReference type="RefSeq" id="NP_001373119.1">
    <property type="nucleotide sequence ID" value="NM_001386190.1"/>
</dbReference>
<dbReference type="RefSeq" id="NP_001373120.1">
    <property type="nucleotide sequence ID" value="NM_001386191.1"/>
</dbReference>
<dbReference type="RefSeq" id="NP_001373122.1">
    <property type="nucleotide sequence ID" value="NM_001386193.1"/>
</dbReference>
<dbReference type="RefSeq" id="NP_001373123.1">
    <property type="nucleotide sequence ID" value="NM_001386194.1"/>
</dbReference>
<dbReference type="RefSeq" id="NP_001373133.1">
    <property type="nucleotide sequence ID" value="NM_001386204.1"/>
</dbReference>
<dbReference type="RefSeq" id="NP_001373137.1">
    <property type="nucleotide sequence ID" value="NM_001386208.1"/>
</dbReference>
<dbReference type="RefSeq" id="NP_001373138.1">
    <property type="nucleotide sequence ID" value="NM_001386209.1"/>
</dbReference>
<dbReference type="RefSeq" id="NP_001373141.1">
    <property type="nucleotide sequence ID" value="NM_001386212.1"/>
</dbReference>
<dbReference type="RefSeq" id="NP_001373142.1">
    <property type="nucleotide sequence ID" value="NM_001386213.1"/>
</dbReference>
<dbReference type="RefSeq" id="NP_945341.3">
    <property type="nucleotide sequence ID" value="NM_198990.4"/>
</dbReference>
<dbReference type="RefSeq" id="XP_005250271.2">
    <property type="nucleotide sequence ID" value="XM_005250214.4"/>
</dbReference>
<dbReference type="RefSeq" id="XP_005250272.1">
    <property type="nucleotide sequence ID" value="XM_005250215.2"/>
</dbReference>
<dbReference type="RefSeq" id="XP_005250275.1">
    <property type="nucleotide sequence ID" value="XM_005250218.2"/>
</dbReference>
<dbReference type="RefSeq" id="XP_011514235.1">
    <property type="nucleotide sequence ID" value="XM_011515933.2"/>
</dbReference>
<dbReference type="RefSeq" id="XP_016867343.1">
    <property type="nucleotide sequence ID" value="XM_017011854.1"/>
</dbReference>
<dbReference type="RefSeq" id="XP_016867344.1">
    <property type="nucleotide sequence ID" value="XM_017011855.1"/>
</dbReference>
<dbReference type="PDB" id="4QN9">
    <property type="method" value="X-ray"/>
    <property type="resolution" value="2.65 A"/>
    <property type="chains" value="A/B=1-393"/>
</dbReference>
<dbReference type="PDB" id="8P90">
    <property type="method" value="X-ray"/>
    <property type="resolution" value="2.80 A"/>
    <property type="chains" value="A/B=1-393"/>
</dbReference>
<dbReference type="PDB" id="8P96">
    <property type="method" value="X-ray"/>
    <property type="resolution" value="2.86 A"/>
    <property type="chains" value="A/B=1-393"/>
</dbReference>
<dbReference type="PDB" id="8PC4">
    <property type="method" value="X-ray"/>
    <property type="resolution" value="2.85 A"/>
    <property type="chains" value="A/B=1-393"/>
</dbReference>
<dbReference type="PDBsum" id="4QN9"/>
<dbReference type="PDBsum" id="8P90"/>
<dbReference type="PDBsum" id="8P96"/>
<dbReference type="PDBsum" id="8PC4"/>
<dbReference type="SMR" id="Q6IQ20"/>
<dbReference type="BioGRID" id="128793">
    <property type="interactions" value="4"/>
</dbReference>
<dbReference type="DIP" id="DIP-61398N"/>
<dbReference type="FunCoup" id="Q6IQ20">
    <property type="interactions" value="865"/>
</dbReference>
<dbReference type="IntAct" id="Q6IQ20">
    <property type="interactions" value="2"/>
</dbReference>
<dbReference type="STRING" id="9606.ENSP00000407112"/>
<dbReference type="BindingDB" id="Q6IQ20"/>
<dbReference type="ChEMBL" id="CHEMBL4630839"/>
<dbReference type="DrugBank" id="DB14009">
    <property type="generic name" value="Medical Cannabis"/>
</dbReference>
<dbReference type="DrugCentral" id="Q6IQ20"/>
<dbReference type="GuidetoPHARMACOLOGY" id="1398"/>
<dbReference type="SwissLipids" id="SLP:000001132"/>
<dbReference type="iPTMnet" id="Q6IQ20"/>
<dbReference type="PhosphoSitePlus" id="Q6IQ20"/>
<dbReference type="BioMuta" id="NAPEPLD"/>
<dbReference type="DMDM" id="167016292"/>
<dbReference type="jPOST" id="Q6IQ20"/>
<dbReference type="MassIVE" id="Q6IQ20"/>
<dbReference type="PaxDb" id="9606-ENSP00000407112"/>
<dbReference type="PeptideAtlas" id="Q6IQ20"/>
<dbReference type="ProteomicsDB" id="66476"/>
<dbReference type="Antibodypedia" id="16885">
    <property type="antibodies" value="180 antibodies from 22 providers"/>
</dbReference>
<dbReference type="DNASU" id="222236"/>
<dbReference type="Ensembl" id="ENST00000341533.8">
    <property type="protein sequence ID" value="ENSP00000340093.4"/>
    <property type="gene ID" value="ENSG00000161048.12"/>
</dbReference>
<dbReference type="Ensembl" id="ENST00000417955.5">
    <property type="protein sequence ID" value="ENSP00000407112.1"/>
    <property type="gene ID" value="ENSG00000161048.12"/>
</dbReference>
<dbReference type="Ensembl" id="ENST00000422589.5">
    <property type="protein sequence ID" value="ENSP00000412376.1"/>
    <property type="gene ID" value="ENSG00000161048.12"/>
</dbReference>
<dbReference type="Ensembl" id="ENST00000427257.5">
    <property type="protein sequence ID" value="ENSP00000392775.1"/>
    <property type="gene ID" value="ENSG00000161048.12"/>
</dbReference>
<dbReference type="Ensembl" id="ENST00000465647.6">
    <property type="protein sequence ID" value="ENSP00000419188.1"/>
    <property type="gene ID" value="ENSG00000161048.12"/>
</dbReference>
<dbReference type="Ensembl" id="ENST00000611100.2">
    <property type="protein sequence ID" value="ENSP00000482162.1"/>
    <property type="gene ID" value="ENSG00000275723.4"/>
</dbReference>
<dbReference type="Ensembl" id="ENST00000622712.4">
    <property type="protein sequence ID" value="ENSP00000481285.1"/>
    <property type="gene ID" value="ENSG00000275723.4"/>
</dbReference>
<dbReference type="Ensembl" id="ENST00000632159.1">
    <property type="protein sequence ID" value="ENSP00000488504.1"/>
    <property type="gene ID" value="ENSG00000275723.4"/>
</dbReference>
<dbReference type="Ensembl" id="ENST00000632703.1">
    <property type="protein sequence ID" value="ENSP00000488648.1"/>
    <property type="gene ID" value="ENSG00000275723.4"/>
</dbReference>
<dbReference type="Ensembl" id="ENST00000633783.1">
    <property type="protein sequence ID" value="ENSP00000487770.1"/>
    <property type="gene ID" value="ENSG00000275723.4"/>
</dbReference>
<dbReference type="GeneID" id="222236"/>
<dbReference type="KEGG" id="hsa:222236"/>
<dbReference type="MANE-Select" id="ENST00000465647.6">
    <property type="protein sequence ID" value="ENSP00000419188.1"/>
    <property type="RefSeq nucleotide sequence ID" value="NM_001122838.3"/>
    <property type="RefSeq protein sequence ID" value="NP_001116310.1"/>
</dbReference>
<dbReference type="UCSC" id="uc003vbc.3">
    <property type="organism name" value="human"/>
</dbReference>
<dbReference type="AGR" id="HGNC:21683"/>
<dbReference type="CTD" id="222236"/>
<dbReference type="DisGeNET" id="222236"/>
<dbReference type="GeneCards" id="NAPEPLD"/>
<dbReference type="HGNC" id="HGNC:21683">
    <property type="gene designation" value="NAPEPLD"/>
</dbReference>
<dbReference type="HPA" id="ENSG00000161048">
    <property type="expression patterns" value="Low tissue specificity"/>
</dbReference>
<dbReference type="MIM" id="612334">
    <property type="type" value="gene"/>
</dbReference>
<dbReference type="neXtProt" id="NX_Q6IQ20"/>
<dbReference type="OpenTargets" id="ENSG00000161048"/>
<dbReference type="PharmGKB" id="PA162396960"/>
<dbReference type="VEuPathDB" id="HostDB:ENSG00000161048"/>
<dbReference type="eggNOG" id="KOG3798">
    <property type="taxonomic scope" value="Eukaryota"/>
</dbReference>
<dbReference type="GeneTree" id="ENSGT00390000017990"/>
<dbReference type="HOGENOM" id="CLU_020884_2_1_1"/>
<dbReference type="InParanoid" id="Q6IQ20"/>
<dbReference type="OMA" id="QHWTRRT"/>
<dbReference type="OrthoDB" id="332863at2759"/>
<dbReference type="PAN-GO" id="Q6IQ20">
    <property type="GO annotations" value="5 GO annotations based on evolutionary models"/>
</dbReference>
<dbReference type="PhylomeDB" id="Q6IQ20"/>
<dbReference type="TreeFam" id="TF313520"/>
<dbReference type="BioCyc" id="MetaCyc:ENSG00000161048-MONOMER"/>
<dbReference type="BRENDA" id="3.1.4.54">
    <property type="organism ID" value="2681"/>
</dbReference>
<dbReference type="PathwayCommons" id="Q6IQ20"/>
<dbReference type="Reactome" id="R-HSA-2466712">
    <property type="pathway name" value="Biosynthesis of A2E, implicated in retinal degradation"/>
</dbReference>
<dbReference type="SignaLink" id="Q6IQ20"/>
<dbReference type="BioGRID-ORCS" id="222236">
    <property type="hits" value="6 hits in 1154 CRISPR screens"/>
</dbReference>
<dbReference type="ChiTaRS" id="NAPEPLD">
    <property type="organism name" value="human"/>
</dbReference>
<dbReference type="EvolutionaryTrace" id="Q6IQ20"/>
<dbReference type="GenomeRNAi" id="222236"/>
<dbReference type="Pharos" id="Q6IQ20">
    <property type="development level" value="Tchem"/>
</dbReference>
<dbReference type="PRO" id="PR:Q6IQ20"/>
<dbReference type="Proteomes" id="UP000005640">
    <property type="component" value="Chromosome 7"/>
</dbReference>
<dbReference type="RNAct" id="Q6IQ20">
    <property type="molecule type" value="protein"/>
</dbReference>
<dbReference type="Bgee" id="ENSG00000161048">
    <property type="expression patterns" value="Expressed in corpus callosum and 105 other cell types or tissues"/>
</dbReference>
<dbReference type="ExpressionAtlas" id="Q6IQ20">
    <property type="expression patterns" value="baseline and differential"/>
</dbReference>
<dbReference type="GO" id="GO:0005737">
    <property type="term" value="C:cytoplasm"/>
    <property type="evidence" value="ECO:0000318"/>
    <property type="project" value="GO_Central"/>
</dbReference>
<dbReference type="GO" id="GO:0005769">
    <property type="term" value="C:early endosome"/>
    <property type="evidence" value="ECO:0000250"/>
    <property type="project" value="UniProtKB"/>
</dbReference>
<dbReference type="GO" id="GO:0031901">
    <property type="term" value="C:early endosome membrane"/>
    <property type="evidence" value="ECO:0007669"/>
    <property type="project" value="UniProtKB-SubCell"/>
</dbReference>
<dbReference type="GO" id="GO:0070062">
    <property type="term" value="C:extracellular exosome"/>
    <property type="evidence" value="ECO:0007005"/>
    <property type="project" value="UniProtKB"/>
</dbReference>
<dbReference type="GO" id="GO:0005794">
    <property type="term" value="C:Golgi apparatus"/>
    <property type="evidence" value="ECO:0000314"/>
    <property type="project" value="UniProtKB"/>
</dbReference>
<dbReference type="GO" id="GO:0000139">
    <property type="term" value="C:Golgi membrane"/>
    <property type="evidence" value="ECO:0007669"/>
    <property type="project" value="UniProtKB-SubCell"/>
</dbReference>
<dbReference type="GO" id="GO:0098686">
    <property type="term" value="C:hippocampal mossy fiber to CA3 synapse"/>
    <property type="evidence" value="ECO:0007669"/>
    <property type="project" value="Ensembl"/>
</dbReference>
<dbReference type="GO" id="GO:0043005">
    <property type="term" value="C:neuron projection"/>
    <property type="evidence" value="ECO:0000318"/>
    <property type="project" value="GO_Central"/>
</dbReference>
<dbReference type="GO" id="GO:0043025">
    <property type="term" value="C:neuronal cell body"/>
    <property type="evidence" value="ECO:0000318"/>
    <property type="project" value="GO_Central"/>
</dbReference>
<dbReference type="GO" id="GO:0005635">
    <property type="term" value="C:nuclear envelope"/>
    <property type="evidence" value="ECO:0000250"/>
    <property type="project" value="UniProtKB"/>
</dbReference>
<dbReference type="GO" id="GO:0005654">
    <property type="term" value="C:nucleoplasm"/>
    <property type="evidence" value="ECO:0000250"/>
    <property type="project" value="UniProtKB"/>
</dbReference>
<dbReference type="GO" id="GO:0042622">
    <property type="term" value="C:photoreceptor outer segment membrane"/>
    <property type="evidence" value="ECO:0000304"/>
    <property type="project" value="Reactome"/>
</dbReference>
<dbReference type="GO" id="GO:0045211">
    <property type="term" value="C:postsynaptic membrane"/>
    <property type="evidence" value="ECO:0007669"/>
    <property type="project" value="Ensembl"/>
</dbReference>
<dbReference type="GO" id="GO:0042734">
    <property type="term" value="C:presynaptic membrane"/>
    <property type="evidence" value="ECO:0007669"/>
    <property type="project" value="Ensembl"/>
</dbReference>
<dbReference type="GO" id="GO:0030868">
    <property type="term" value="C:smooth endoplasmic reticulum membrane"/>
    <property type="evidence" value="ECO:0007669"/>
    <property type="project" value="Ensembl"/>
</dbReference>
<dbReference type="GO" id="GO:0032052">
    <property type="term" value="F:bile acid binding"/>
    <property type="evidence" value="ECO:0000314"/>
    <property type="project" value="UniProtKB"/>
</dbReference>
<dbReference type="GO" id="GO:0042802">
    <property type="term" value="F:identical protein binding"/>
    <property type="evidence" value="ECO:0000353"/>
    <property type="project" value="IntAct"/>
</dbReference>
<dbReference type="GO" id="GO:0070290">
    <property type="term" value="F:N-acylphosphatidylethanolamine-specific phospholipase D activity"/>
    <property type="evidence" value="ECO:0000314"/>
    <property type="project" value="UniProtKB"/>
</dbReference>
<dbReference type="GO" id="GO:0008270">
    <property type="term" value="F:zinc ion binding"/>
    <property type="evidence" value="ECO:0000314"/>
    <property type="project" value="UniProtKB"/>
</dbReference>
<dbReference type="GO" id="GO:0048874">
    <property type="term" value="P:host-mediated regulation of intestinal microbiota composition"/>
    <property type="evidence" value="ECO:0000250"/>
    <property type="project" value="UniProtKB"/>
</dbReference>
<dbReference type="GO" id="GO:0070291">
    <property type="term" value="P:N-acylethanolamine metabolic process"/>
    <property type="evidence" value="ECO:0000318"/>
    <property type="project" value="GO_Central"/>
</dbReference>
<dbReference type="GO" id="GO:0070292">
    <property type="term" value="P:N-acylphosphatidylethanolamine metabolic process"/>
    <property type="evidence" value="ECO:0000314"/>
    <property type="project" value="UniProtKB"/>
</dbReference>
<dbReference type="GO" id="GO:1903999">
    <property type="term" value="P:negative regulation of eating behavior"/>
    <property type="evidence" value="ECO:0007669"/>
    <property type="project" value="Ensembl"/>
</dbReference>
<dbReference type="GO" id="GO:0009395">
    <property type="term" value="P:phospholipid catabolic process"/>
    <property type="evidence" value="ECO:0007669"/>
    <property type="project" value="UniProtKB-KW"/>
</dbReference>
<dbReference type="GO" id="GO:0090336">
    <property type="term" value="P:positive regulation of brown fat cell differentiation"/>
    <property type="evidence" value="ECO:0000250"/>
    <property type="project" value="UniProtKB"/>
</dbReference>
<dbReference type="GO" id="GO:0050729">
    <property type="term" value="P:positive regulation of inflammatory response"/>
    <property type="evidence" value="ECO:0000250"/>
    <property type="project" value="UniProtKB"/>
</dbReference>
<dbReference type="GO" id="GO:0035900">
    <property type="term" value="P:response to isolation stress"/>
    <property type="evidence" value="ECO:0007669"/>
    <property type="project" value="Ensembl"/>
</dbReference>
<dbReference type="GO" id="GO:0001659">
    <property type="term" value="P:temperature homeostasis"/>
    <property type="evidence" value="ECO:0000250"/>
    <property type="project" value="UniProtKB"/>
</dbReference>
<dbReference type="FunFam" id="3.60.15.10:FF:000016">
    <property type="entry name" value="N-acyl-phosphatidylethanolamine-hydrolyzing phospholipase D, putative"/>
    <property type="match status" value="1"/>
</dbReference>
<dbReference type="Gene3D" id="3.60.15.10">
    <property type="entry name" value="Ribonuclease Z/Hydroxyacylglutathione hydrolase-like"/>
    <property type="match status" value="1"/>
</dbReference>
<dbReference type="InterPro" id="IPR001279">
    <property type="entry name" value="Metallo-B-lactamas"/>
</dbReference>
<dbReference type="InterPro" id="IPR024884">
    <property type="entry name" value="NAPE-PLD"/>
</dbReference>
<dbReference type="InterPro" id="IPR036866">
    <property type="entry name" value="RibonucZ/Hydroxyglut_hydro"/>
</dbReference>
<dbReference type="PANTHER" id="PTHR15032">
    <property type="entry name" value="N-ACYL-PHOSPHATIDYLETHANOLAMINE-HYDROLYZING PHOSPHOLIPASE D"/>
    <property type="match status" value="1"/>
</dbReference>
<dbReference type="PANTHER" id="PTHR15032:SF4">
    <property type="entry name" value="N-ACYL-PHOSPHATIDYLETHANOLAMINE-HYDROLYZING PHOSPHOLIPASE D"/>
    <property type="match status" value="1"/>
</dbReference>
<dbReference type="Pfam" id="PF12706">
    <property type="entry name" value="Lactamase_B_2"/>
    <property type="match status" value="1"/>
</dbReference>
<dbReference type="PIRSF" id="PIRSF038896">
    <property type="entry name" value="NAPE-PLD"/>
    <property type="match status" value="1"/>
</dbReference>
<dbReference type="SUPFAM" id="SSF56281">
    <property type="entry name" value="Metallo-hydrolase/oxidoreductase"/>
    <property type="match status" value="1"/>
</dbReference>
<proteinExistence type="evidence at protein level"/>
<keyword id="KW-0002">3D-structure</keyword>
<keyword id="KW-0007">Acetylation</keyword>
<keyword id="KW-0967">Endosome</keyword>
<keyword id="KW-0333">Golgi apparatus</keyword>
<keyword id="KW-0378">Hydrolase</keyword>
<keyword id="KW-0442">Lipid degradation</keyword>
<keyword id="KW-0443">Lipid metabolism</keyword>
<keyword id="KW-0472">Membrane</keyword>
<keyword id="KW-0479">Metal-binding</keyword>
<keyword id="KW-0539">Nucleus</keyword>
<keyword id="KW-0595">Phospholipid degradation</keyword>
<keyword id="KW-1208">Phospholipid metabolism</keyword>
<keyword id="KW-1267">Proteomics identification</keyword>
<keyword id="KW-1185">Reference proteome</keyword>
<keyword id="KW-0862">Zinc</keyword>
<name>NAPEP_HUMAN</name>
<sequence>MDENESNQSLMTSSQYPKEAVRKRQNSARNSGASDSSRFSRKSFKLDYRLEEDVTKSKKGKDGRFVNPWPTWKNPSIPNVLRWLIMEKDHSSVPSSKEELDKELPVLKPYFITNPEEAGVREAGLRVTWLGHATVMVEMDELIFLTDPIFSSRASPSQYMGPKRFRRSPCTISELPPIDAVLISHNHYDHLDYNSVIALNERFGNELRWFVPLGLLDWMQKCGCENVIELDWWEENCVPGHDKVTFVFTPSQHWCKRTLMDDNKVLWGSWSVLGPWNRFFFAGDTGYCPAFEEIGKRFGPFDLAAIPIGAYEPRWFMKYQHVDPEEAVRIHTDVQTKKSMAIHWGTFALANEHYLEPPVKLNEALERYGLNAEDFFVLKHGESRYLNNDDENF</sequence>
<accession>Q6IQ20</accession>
<accession>Q5CZ87</accession>
<accession>Q769K1</accession>
<comment type="function">
    <text evidence="2 4 6 8 9">D-type phospholipase that hydrolyzes N-acyl-phosphatidylethanolamines (NAPEs) to produce bioactive N-acylethanolamines/fatty acid ethanolamides (NAEs/FAEs) and phosphatidic acid (PubMed:14634025, PubMed:16527816, PubMed:25684574, PubMed:27571266). Cleaves the terminal phosphodiester bond of diacyl- and alkenylacyl-NAPEs, primarily playing a role in the generation of long-chain saturated and monounsaturated NAEs in the brain (By similarity). May control NAPE homeostasis in dopaminergic neuron membranes and regulate neuron survival, partly through RAC1 activation (By similarity). As a regulator of lipid metabolism in the adipose tissue, mediates the crosstalk between adipocytes, gut microbiota and immune cells to control body temperature and weight. In particular, regulates energy homeostasis by promoting cold-induced brown or beige adipocyte differentiation program to generate heat from fatty acids and glucose. Has limited D-type phospholipase activity toward N-acyl lyso-NAPEs (By similarity).</text>
</comment>
<comment type="catalytic activity">
    <reaction evidence="4 6 8 9">
        <text>an N-acyl-1,2-diacyl-sn-glycero-3-phosphoethanolamine + H2O = an N-acylethanolamine + a 1,2-diacyl-sn-glycero-3-phosphate + H(+)</text>
        <dbReference type="Rhea" id="RHEA:33159"/>
        <dbReference type="ChEBI" id="CHEBI:15377"/>
        <dbReference type="ChEBI" id="CHEBI:15378"/>
        <dbReference type="ChEBI" id="CHEBI:52640"/>
        <dbReference type="ChEBI" id="CHEBI:58608"/>
        <dbReference type="ChEBI" id="CHEBI:62537"/>
        <dbReference type="EC" id="3.1.4.54"/>
    </reaction>
    <physiologicalReaction direction="left-to-right" evidence="13 14 15 16">
        <dbReference type="Rhea" id="RHEA:33160"/>
    </physiologicalReaction>
</comment>
<comment type="catalytic activity">
    <reaction evidence="1">
        <text>N-butanoyl-1-hexadecanoyl-2-(9Z,12Z-octadecadienoyl)-sn-glycero-3-phosphoethanolamine + H2O = N-butanoyl ethanolamine + 1-hexadecanoyl-2-(9Z,12Z-octadecadienoyl)-sn-glycero-3-phosphate + H(+)</text>
        <dbReference type="Rhea" id="RHEA:45620"/>
        <dbReference type="ChEBI" id="CHEBI:15377"/>
        <dbReference type="ChEBI" id="CHEBI:15378"/>
        <dbReference type="ChEBI" id="CHEBI:72860"/>
        <dbReference type="ChEBI" id="CHEBI:85298"/>
        <dbReference type="ChEBI" id="CHEBI:85304"/>
    </reaction>
    <physiologicalReaction direction="left-to-right" evidence="1">
        <dbReference type="Rhea" id="RHEA:45621"/>
    </physiologicalReaction>
</comment>
<comment type="catalytic activity">
    <reaction evidence="1">
        <text>N-hexanoyl-1-hexadecanoyl-2-(9Z,12Z-octadecadienoyl)-sn-glycero-3-phosphoethanolamine + H2O = N-hexanoyl ethanolamine + 1-hexadecanoyl-2-(9Z,12Z-octadecadienoyl)-sn-glycero-3-phosphate + H(+)</text>
        <dbReference type="Rhea" id="RHEA:45616"/>
        <dbReference type="ChEBI" id="CHEBI:15377"/>
        <dbReference type="ChEBI" id="CHEBI:15378"/>
        <dbReference type="ChEBI" id="CHEBI:72860"/>
        <dbReference type="ChEBI" id="CHEBI:85297"/>
        <dbReference type="ChEBI" id="CHEBI:85303"/>
    </reaction>
    <physiologicalReaction direction="left-to-right" evidence="1">
        <dbReference type="Rhea" id="RHEA:45617"/>
    </physiologicalReaction>
</comment>
<comment type="catalytic activity">
    <reaction evidence="1">
        <text>N-octanoyl-1-hexadecanoyl-2-(9Z,12Z-octadecadienoyl)-sn-glycero-3-phosphoethanolamine + H2O = N-octanoyl ethanolamine + 1-hexadecanoyl-2-(9Z,12Z-octadecadienoyl)-sn-glycero-3-phosphate + H(+)</text>
        <dbReference type="Rhea" id="RHEA:45612"/>
        <dbReference type="ChEBI" id="CHEBI:15377"/>
        <dbReference type="ChEBI" id="CHEBI:15378"/>
        <dbReference type="ChEBI" id="CHEBI:72860"/>
        <dbReference type="ChEBI" id="CHEBI:85296"/>
        <dbReference type="ChEBI" id="CHEBI:85302"/>
    </reaction>
    <physiologicalReaction direction="left-to-right" evidence="1">
        <dbReference type="Rhea" id="RHEA:45613"/>
    </physiologicalReaction>
</comment>
<comment type="catalytic activity">
    <reaction evidence="1">
        <text>N-decanoyl-1-hexadecanoyl-2-(9Z,12Z-octadecadienoyl)-sn-glycero-3-phosphoethanolamine + H2O = N-decanoyl ethanolamine + 1-hexadecanoyl-2-(9Z,12Z-octadecadienoyl)-sn-glycero-3-phosphate + H(+)</text>
        <dbReference type="Rhea" id="RHEA:45608"/>
        <dbReference type="ChEBI" id="CHEBI:15377"/>
        <dbReference type="ChEBI" id="CHEBI:15378"/>
        <dbReference type="ChEBI" id="CHEBI:72860"/>
        <dbReference type="ChEBI" id="CHEBI:85295"/>
        <dbReference type="ChEBI" id="CHEBI:85301"/>
    </reaction>
    <physiologicalReaction direction="left-to-right" evidence="1">
        <dbReference type="Rhea" id="RHEA:45609"/>
    </physiologicalReaction>
</comment>
<comment type="catalytic activity">
    <reaction evidence="1">
        <text>N-dodecanoyl-1,2-di-(9Z-octadecenoyl)-sn-glycero-3-phosphoethanolamine + H2O = N-dodecanoylethanolamine + 1,2-di-(9Z-octadecenoyl)-sn-glycero-3-phosphate + H(+)</text>
        <dbReference type="Rhea" id="RHEA:45556"/>
        <dbReference type="ChEBI" id="CHEBI:15377"/>
        <dbReference type="ChEBI" id="CHEBI:15378"/>
        <dbReference type="ChEBI" id="CHEBI:74546"/>
        <dbReference type="ChEBI" id="CHEBI:85263"/>
        <dbReference type="ChEBI" id="CHEBI:85294"/>
    </reaction>
    <physiologicalReaction direction="left-to-right" evidence="1">
        <dbReference type="Rhea" id="RHEA:45557"/>
    </physiologicalReaction>
</comment>
<comment type="catalytic activity">
    <reaction evidence="1">
        <text>N-tetradecanoyl-1,2-di-(9Z-octadecenoyl)-sn-glycero-3-phosphoethanolamine + H2O = N-tetradecanoylethanolamine + 1,2-di-(9Z-octadecenoyl)-sn-glycero-3-phosphate + H(+)</text>
        <dbReference type="Rhea" id="RHEA:45552"/>
        <dbReference type="ChEBI" id="CHEBI:15377"/>
        <dbReference type="ChEBI" id="CHEBI:15378"/>
        <dbReference type="ChEBI" id="CHEBI:74546"/>
        <dbReference type="ChEBI" id="CHEBI:85262"/>
        <dbReference type="ChEBI" id="CHEBI:85293"/>
    </reaction>
    <physiologicalReaction direction="left-to-right" evidence="1">
        <dbReference type="Rhea" id="RHEA:45553"/>
    </physiologicalReaction>
</comment>
<comment type="catalytic activity">
    <reaction evidence="6">
        <text>N-hexadecanoyl-1,2-di-(9Z-octadecenoyl)-sn-glycero-3-phosphoethanolamine + H2O = N-hexadecanoylethanolamine + 1,2-di-(9Z-octadecenoyl)-sn-glycero-3-phosphate + H(+)</text>
        <dbReference type="Rhea" id="RHEA:45540"/>
        <dbReference type="ChEBI" id="CHEBI:15377"/>
        <dbReference type="ChEBI" id="CHEBI:15378"/>
        <dbReference type="ChEBI" id="CHEBI:71464"/>
        <dbReference type="ChEBI" id="CHEBI:74546"/>
        <dbReference type="ChEBI" id="CHEBI:78097"/>
    </reaction>
    <physiologicalReaction direction="left-to-right" evidence="14">
        <dbReference type="Rhea" id="RHEA:45541"/>
    </physiologicalReaction>
</comment>
<comment type="catalytic activity">
    <reaction evidence="2">
        <text>N,1-dihexadecanoyl-2-(9Z,12Z-octadecadienoyl)-sn-glycero-3-phosphoethanolamine + H2O = 1-hexadecanoyl-2-(9Z,12Z-octadecadienoyl)-sn-glycero-3-phosphate + N-hexadecanoylethanolamine + H(+)</text>
        <dbReference type="Rhea" id="RHEA:45596"/>
        <dbReference type="ChEBI" id="CHEBI:15377"/>
        <dbReference type="ChEBI" id="CHEBI:15378"/>
        <dbReference type="ChEBI" id="CHEBI:71464"/>
        <dbReference type="ChEBI" id="CHEBI:72860"/>
        <dbReference type="ChEBI" id="CHEBI:85334"/>
    </reaction>
    <physiologicalReaction direction="left-to-right" evidence="2">
        <dbReference type="Rhea" id="RHEA:45597"/>
    </physiologicalReaction>
</comment>
<comment type="catalytic activity">
    <reaction evidence="1 2">
        <text>N-octadecanoyl-1,2-di-(9Z-octadecenoyl)-sn-glycero-3-phosphoethanolamine + H2O = N-octadecanoyl ethanolamine + 1,2-di-(9Z-octadecenoyl)-sn-glycero-3-phosphate + H(+)</text>
        <dbReference type="Rhea" id="RHEA:45536"/>
        <dbReference type="ChEBI" id="CHEBI:15377"/>
        <dbReference type="ChEBI" id="CHEBI:15378"/>
        <dbReference type="ChEBI" id="CHEBI:74546"/>
        <dbReference type="ChEBI" id="CHEBI:85292"/>
        <dbReference type="ChEBI" id="CHEBI:85299"/>
    </reaction>
    <physiologicalReaction direction="left-to-right" evidence="1 2">
        <dbReference type="Rhea" id="RHEA:45537"/>
    </physiologicalReaction>
</comment>
<comment type="catalytic activity">
    <reaction evidence="1 2">
        <text>N,1,2-tri-(9Z-octadecenoyl)-sn-glycero-3-phosphoethanolamine + H2O = N-(9Z-octadecenoyl) ethanolamine + 1,2-di-(9Z-octadecenoyl)-sn-glycero-3-phosphate + H(+)</text>
        <dbReference type="Rhea" id="RHEA:45532"/>
        <dbReference type="ChEBI" id="CHEBI:15377"/>
        <dbReference type="ChEBI" id="CHEBI:15378"/>
        <dbReference type="ChEBI" id="CHEBI:71466"/>
        <dbReference type="ChEBI" id="CHEBI:74546"/>
        <dbReference type="ChEBI" id="CHEBI:85291"/>
    </reaction>
    <physiologicalReaction direction="left-to-right" evidence="1 2">
        <dbReference type="Rhea" id="RHEA:45533"/>
    </physiologicalReaction>
</comment>
<comment type="catalytic activity">
    <reaction evidence="9">
        <text>N-(5Z,8Z,11Z,14Z-eicosatetraenoyl)-1,2-diacyl-sn-glycero-3-phosphoethanolamine + H2O = N-(5Z,8Z,11Z,14Z-eicosatetraenoyl)-ethanolamine + a 1,2-diacyl-sn-glycero-3-phosphate + H(+)</text>
        <dbReference type="Rhea" id="RHEA:56548"/>
        <dbReference type="ChEBI" id="CHEBI:2700"/>
        <dbReference type="ChEBI" id="CHEBI:15377"/>
        <dbReference type="ChEBI" id="CHEBI:15378"/>
        <dbReference type="ChEBI" id="CHEBI:58608"/>
        <dbReference type="ChEBI" id="CHEBI:140532"/>
    </reaction>
    <physiologicalReaction direction="left-to-right" evidence="16">
        <dbReference type="Rhea" id="RHEA:56549"/>
    </physiologicalReaction>
</comment>
<comment type="catalytic activity">
    <reaction evidence="1 2">
        <text>N-(5Z,8Z,11Z,14Z-eicosatetraenoyl)-1,2-di-(9Z-octadecenoyl)-sn-glycero-3-phosphoethanolamine + H2O = N-(5Z,8Z,11Z,14Z-eicosatetraenoyl)-ethanolamine + 1,2-di-(9Z-octadecenoyl)-sn-glycero-3-phosphate + H(+)</text>
        <dbReference type="Rhea" id="RHEA:45528"/>
        <dbReference type="ChEBI" id="CHEBI:2700"/>
        <dbReference type="ChEBI" id="CHEBI:15377"/>
        <dbReference type="ChEBI" id="CHEBI:15378"/>
        <dbReference type="ChEBI" id="CHEBI:74546"/>
        <dbReference type="ChEBI" id="CHEBI:85277"/>
    </reaction>
    <physiologicalReaction direction="left-to-right" evidence="1 2">
        <dbReference type="Rhea" id="RHEA:45529"/>
    </physiologicalReaction>
</comment>
<comment type="catalytic activity">
    <reaction evidence="2">
        <text>1-O-(1Z-octadecenoyl)-2-(9Z-octadecenoyl)-sn-glycero-3-phospho-N-hexadecanoyl-ethanolamine + H2O = 1-O-(1Z-octadecenoyl)-2-(9Z-octadecenoyl)-sn-glycero-3-phosphate + N-hexadecanoylethanolamine + H(+)</text>
        <dbReference type="Rhea" id="RHEA:56464"/>
        <dbReference type="ChEBI" id="CHEBI:15377"/>
        <dbReference type="ChEBI" id="CHEBI:15378"/>
        <dbReference type="ChEBI" id="CHEBI:71464"/>
        <dbReference type="ChEBI" id="CHEBI:138663"/>
        <dbReference type="ChEBI" id="CHEBI:140452"/>
    </reaction>
    <physiologicalReaction direction="left-to-right" evidence="2">
        <dbReference type="Rhea" id="RHEA:56465"/>
    </physiologicalReaction>
</comment>
<comment type="catalytic activity">
    <reaction evidence="2">
        <text>N,1-diacyl-sn-glycero-3-phosphoethanolamine + H2O = an N-acylethanolamine + a 1-acyl-sn-glycero-3-phosphate + H(+)</text>
        <dbReference type="Rhea" id="RHEA:53164"/>
        <dbReference type="ChEBI" id="CHEBI:15377"/>
        <dbReference type="ChEBI" id="CHEBI:15378"/>
        <dbReference type="ChEBI" id="CHEBI:52640"/>
        <dbReference type="ChEBI" id="CHEBI:57970"/>
        <dbReference type="ChEBI" id="CHEBI:85216"/>
    </reaction>
    <physiologicalReaction direction="left-to-right" evidence="2">
        <dbReference type="Rhea" id="RHEA:53165"/>
    </physiologicalReaction>
</comment>
<comment type="catalytic activity">
    <reaction evidence="2">
        <text>N,1-dihexadecanoyl-sn-glycero-3-phosphoethanolamine + H2O = N-hexadecanoylethanolamine + 1-hexadecanoyl-sn-glycero-3-phosphate + H(+)</text>
        <dbReference type="Rhea" id="RHEA:45592"/>
        <dbReference type="ChEBI" id="CHEBI:15377"/>
        <dbReference type="ChEBI" id="CHEBI:15378"/>
        <dbReference type="ChEBI" id="CHEBI:57518"/>
        <dbReference type="ChEBI" id="CHEBI:71464"/>
        <dbReference type="ChEBI" id="CHEBI:85335"/>
    </reaction>
    <physiologicalReaction direction="left-to-right" evidence="2">
        <dbReference type="Rhea" id="RHEA:45593"/>
    </physiologicalReaction>
</comment>
<comment type="catalytic activity">
    <reaction evidence="2">
        <text>N-(5Z,8Z,11Z,14Z-eicosatetraenoyl)-1-(9Z-octadecenoyl)-sn-glycero-3-phosphoethanolamine + H2O = N-(5Z,8Z,11Z,14Z-eicosatetraenoyl)-ethanolamine + 1-(9Z-octadecenoyl)-sn-glycero-3-phosphate + H(+)</text>
        <dbReference type="Rhea" id="RHEA:45544"/>
        <dbReference type="ChEBI" id="CHEBI:2700"/>
        <dbReference type="ChEBI" id="CHEBI:15377"/>
        <dbReference type="ChEBI" id="CHEBI:15378"/>
        <dbReference type="ChEBI" id="CHEBI:74544"/>
        <dbReference type="ChEBI" id="CHEBI:85223"/>
    </reaction>
    <physiologicalReaction direction="left-to-right" evidence="2">
        <dbReference type="Rhea" id="RHEA:45545"/>
    </physiologicalReaction>
</comment>
<comment type="cofactor">
    <cofactor evidence="15">
        <name>Zn(2+)</name>
        <dbReference type="ChEBI" id="CHEBI:29105"/>
    </cofactor>
    <text evidence="8">Binds 2 zinc divalent cations per subunit.</text>
</comment>
<comment type="activity regulation">
    <text evidence="6 8 9">Activated by divalent cations (PubMed:16527816). Activated by bile acids and their conjugates, except for lithocholic acid which is rather inhibitory. Binding of deoxycholic acid favors the selective release of anandamide and likely other unsatured long FAEs (PubMed:25684574, PubMed:27571266). Inhibited by phosphatidylethanolamines (PubMed:25684574).</text>
</comment>
<comment type="biophysicochemical properties">
    <kinetics>
        <KM evidence="9">9 uM for N-hexadecanoyl-1,2-diacyl-sn-glycero-3-phosphoethanolamine (in the presence of deoxycholic acid)</KM>
        <KM evidence="9">9 uM for N-(5Z,8Z,11Z,14Z-eicosatetraenoyl)-1,2-diacyl-sn-glycero-3-phosphoethanolamine (in the presence of deoxycholic acid)</KM>
        <Vmax evidence="9">156.0 nmol/min/mg enzyme toward N-hexadecanoyl-1,2-diacyl-sn-glycero-3-phosphoethanolamine (in the presence of deoxycholic acid)</Vmax>
        <Vmax evidence="9">1131.0 nmol/min/mg enzyme toward N-(5Z,8Z,11Z,14Z-eicosatetraenoyl)-1,2-diacyl-sn-glycero-3-phosphoethanolamine (in the presence of deoxycholic acid)</Vmax>
    </kinetics>
</comment>
<comment type="subunit">
    <text evidence="8">Homodimer. Bile acids promote the assembly of inactive monomers into an active dimer and enable catalysis.</text>
</comment>
<comment type="interaction">
    <interactant intactId="EBI-16143143">
        <id>Q6IQ20</id>
    </interactant>
    <interactant intactId="EBI-16143143">
        <id>Q6IQ20</id>
        <label>NAPEPLD</label>
    </interactant>
    <organismsDiffer>false</organismsDiffer>
    <experiments>3</experiments>
</comment>
<comment type="subcellular location">
    <subcellularLocation>
        <location evidence="8">Golgi apparatus membrane</location>
        <topology evidence="15">Peripheral membrane protein</topology>
    </subcellularLocation>
    <subcellularLocation>
        <location evidence="8">Early endosome membrane</location>
        <topology evidence="15">Peripheral membrane protein</topology>
    </subcellularLocation>
    <subcellularLocation>
        <location evidence="8">Nucleus envelope</location>
    </subcellularLocation>
    <subcellularLocation>
        <location evidence="8">Nucleus</location>
        <location evidence="8">Nucleoplasm</location>
    </subcellularLocation>
    <text evidence="8">Localized in the proximity of the cellular membranes likely through interaction with membrane phospholipids.</text>
</comment>
<comment type="tissue specificity">
    <text evidence="2">Widely expressed. Highest expression in brain, kidney and testis (at protein level). Expressed in adipose tissue (at protein level).</text>
</comment>
<comment type="similarity">
    <text evidence="12">Belongs to the NAPE-PLD family.</text>
</comment>
<comment type="online information" name="Wikipedia">
    <link uri="https://en.wikipedia.org/wiki/N-acyl_phosphatidylethanolamine-specific_phospholipase_D"/>
    <text>N-acyl phosphatidylethanolamine-specific phospholipase D entry</text>
</comment>
<reference key="1">
    <citation type="journal article" date="2004" name="J. Biol. Chem.">
        <title>Molecular characterization of a phospholipase D generating anandamide and its congeners.</title>
        <authorList>
            <person name="Okamoto Y."/>
            <person name="Morishita J."/>
            <person name="Tsuboi K."/>
            <person name="Tonai T."/>
            <person name="Ueda N."/>
        </authorList>
    </citation>
    <scope>NUCLEOTIDE SEQUENCE [MRNA]</scope>
    <scope>FUNCTION</scope>
    <scope>CATALYTIC ACTIVITY</scope>
</reference>
<reference key="2">
    <citation type="journal article" date="2005" name="Genomics">
        <title>Isolation and analysis of candidate myeloid tumor suppressor genes from a commonly deleted segment of 7q22.</title>
        <authorList>
            <person name="Curtiss N.P."/>
            <person name="Bonifas J.M."/>
            <person name="Lauchle J.O."/>
            <person name="Balkman J.D."/>
            <person name="Kratz C.P."/>
            <person name="Emerling B.M."/>
            <person name="Green E.D."/>
            <person name="Le Beau M.M."/>
            <person name="Shannon K.M."/>
        </authorList>
    </citation>
    <scope>NUCLEOTIDE SEQUENCE [MRNA]</scope>
</reference>
<reference key="3">
    <citation type="journal article" date="2007" name="BMC Genomics">
        <title>The full-ORF clone resource of the German cDNA consortium.</title>
        <authorList>
            <person name="Bechtel S."/>
            <person name="Rosenfelder H."/>
            <person name="Duda A."/>
            <person name="Schmidt C.P."/>
            <person name="Ernst U."/>
            <person name="Wellenreuther R."/>
            <person name="Mehrle A."/>
            <person name="Schuster C."/>
            <person name="Bahr A."/>
            <person name="Bloecker H."/>
            <person name="Heubner D."/>
            <person name="Hoerlein A."/>
            <person name="Michel G."/>
            <person name="Wedler H."/>
            <person name="Koehrer K."/>
            <person name="Ottenwaelder B."/>
            <person name="Poustka A."/>
            <person name="Wiemann S."/>
            <person name="Schupp I."/>
        </authorList>
    </citation>
    <scope>NUCLEOTIDE SEQUENCE [LARGE SCALE MRNA]</scope>
    <scope>VARIANT ASN-389</scope>
    <source>
        <tissue>Colon carcinoma</tissue>
    </source>
</reference>
<reference key="4">
    <citation type="submission" date="2005-07" db="EMBL/GenBank/DDBJ databases">
        <authorList>
            <person name="Mural R.J."/>
            <person name="Istrail S."/>
            <person name="Sutton G.G."/>
            <person name="Florea L."/>
            <person name="Halpern A.L."/>
            <person name="Mobarry C.M."/>
            <person name="Lippert R."/>
            <person name="Walenz B."/>
            <person name="Shatkay H."/>
            <person name="Dew I."/>
            <person name="Miller J.R."/>
            <person name="Flanigan M.J."/>
            <person name="Edwards N.J."/>
            <person name="Bolanos R."/>
            <person name="Fasulo D."/>
            <person name="Halldorsson B.V."/>
            <person name="Hannenhalli S."/>
            <person name="Turner R."/>
            <person name="Yooseph S."/>
            <person name="Lu F."/>
            <person name="Nusskern D.R."/>
            <person name="Shue B.C."/>
            <person name="Zheng X.H."/>
            <person name="Zhong F."/>
            <person name="Delcher A.L."/>
            <person name="Huson D.H."/>
            <person name="Kravitz S.A."/>
            <person name="Mouchard L."/>
            <person name="Reinert K."/>
            <person name="Remington K.A."/>
            <person name="Clark A.G."/>
            <person name="Waterman M.S."/>
            <person name="Eichler E.E."/>
            <person name="Adams M.D."/>
            <person name="Hunkapiller M.W."/>
            <person name="Myers E.W."/>
            <person name="Venter J.C."/>
        </authorList>
    </citation>
    <scope>NUCLEOTIDE SEQUENCE [LARGE SCALE GENOMIC DNA]</scope>
    <scope>VARIANT ASN-389</scope>
</reference>
<reference key="5">
    <citation type="journal article" date="2004" name="Genome Res.">
        <title>The status, quality, and expansion of the NIH full-length cDNA project: the Mammalian Gene Collection (MGC).</title>
        <authorList>
            <consortium name="The MGC Project Team"/>
        </authorList>
    </citation>
    <scope>NUCLEOTIDE SEQUENCE [LARGE SCALE MRNA]</scope>
    <scope>VARIANT ASN-389</scope>
    <source>
        <tissue>Brain</tissue>
    </source>
</reference>
<reference key="6">
    <citation type="journal article" date="2006" name="J. Biol. Chem.">
        <title>Functional analysis of the purified anandamide-generating phospholipase D as a member of the metallo-beta-lactamase family.</title>
        <authorList>
            <person name="Wang J."/>
            <person name="Okamoto Y."/>
            <person name="Morishita J."/>
            <person name="Tsuboi K."/>
            <person name="Miyatake A."/>
            <person name="Ueda N."/>
        </authorList>
    </citation>
    <scope>FUNCTION</scope>
    <scope>CATALYTIC ACTIVITY</scope>
    <scope>ACTIVITY REGULATION</scope>
    <scope>MUTAGENESIS OF LEU-207 AND HIS-380</scope>
    <scope>VARIANTS ALA-152 AND ASN-389</scope>
</reference>
<reference key="7">
    <citation type="journal article" date="2012" name="Proc. Natl. Acad. Sci. U.S.A.">
        <title>N-terminal acetylome analyses and functional insights of the N-terminal acetyltransferase NatB.</title>
        <authorList>
            <person name="Van Damme P."/>
            <person name="Lasa M."/>
            <person name="Polevoda B."/>
            <person name="Gazquez C."/>
            <person name="Elosegui-Artola A."/>
            <person name="Kim D.S."/>
            <person name="De Juan-Pardo E."/>
            <person name="Demeyer K."/>
            <person name="Hole K."/>
            <person name="Larrea E."/>
            <person name="Timmerman E."/>
            <person name="Prieto J."/>
            <person name="Arnesen T."/>
            <person name="Sherman F."/>
            <person name="Gevaert K."/>
            <person name="Aldabe R."/>
        </authorList>
    </citation>
    <scope>ACETYLATION [LARGE SCALE ANALYSIS] AT MET-1</scope>
    <scope>IDENTIFICATION BY MASS SPECTROMETRY [LARGE SCALE ANALYSIS]</scope>
</reference>
<reference key="8">
    <citation type="journal article" date="2016" name="ACS Chem. Biol.">
        <title>Bile Acid Recognition by NAPE-PLD.</title>
        <authorList>
            <person name="Margheritis E."/>
            <person name="Castellani B."/>
            <person name="Magotti P."/>
            <person name="Peruzzi S."/>
            <person name="Romeo E."/>
            <person name="Natali F."/>
            <person name="Mostarda S."/>
            <person name="Gioiello A."/>
            <person name="Piomelli D."/>
            <person name="Garau G."/>
        </authorList>
    </citation>
    <scope>FUNCTION</scope>
    <scope>CATALYTIC ACTIVITY</scope>
    <scope>BIOPHYSICOCHEMICAL PROPERTIES</scope>
    <scope>ACTIVITY REGULATION</scope>
</reference>
<reference key="9">
    <citation type="journal article" date="2015" name="Structure">
        <title>Structure of human N-acylphosphatidylethanolamine-hydrolyzing phospholipase D: regulation of fatty acid ethanolamide biosynthesis by bile acids.</title>
        <authorList>
            <person name="Magotti P."/>
            <person name="Bauer I."/>
            <person name="Igarashi M."/>
            <person name="Babagoli M."/>
            <person name="Marotta R."/>
            <person name="Piomelli D."/>
            <person name="Garau G."/>
        </authorList>
    </citation>
    <scope>X-RAY CRYSTALLOGRAPHY (2.65 ANGSTROMS) IN COMPLEX WITH ZINC AND DEOXYCHOLIC ACID</scope>
    <scope>CATALYTIC ACTIVITY</scope>
    <scope>ACTIVITY REGULATION</scope>
    <scope>FUNCTION</scope>
    <scope>MUTAGENESIS OF GLN-158; TYR-159 AND ARG-257</scope>
    <scope>COFACTOR</scope>
    <scope>SUBCELLULAR LOCATION</scope>
    <scope>SUBUNIT</scope>
</reference>
<evidence type="ECO:0000250" key="1">
    <source>
        <dbReference type="UniProtKB" id="Q769K2"/>
    </source>
</evidence>
<evidence type="ECO:0000250" key="2">
    <source>
        <dbReference type="UniProtKB" id="Q8BH82"/>
    </source>
</evidence>
<evidence type="ECO:0000256" key="3">
    <source>
        <dbReference type="SAM" id="MobiDB-lite"/>
    </source>
</evidence>
<evidence type="ECO:0000269" key="4">
    <source>
    </source>
</evidence>
<evidence type="ECO:0000269" key="5">
    <source>
    </source>
</evidence>
<evidence type="ECO:0000269" key="6">
    <source>
    </source>
</evidence>
<evidence type="ECO:0000269" key="7">
    <source>
    </source>
</evidence>
<evidence type="ECO:0000269" key="8">
    <source>
    </source>
</evidence>
<evidence type="ECO:0000269" key="9">
    <source>
    </source>
</evidence>
<evidence type="ECO:0000269" key="10">
    <source ref="4"/>
</evidence>
<evidence type="ECO:0000303" key="11">
    <source>
    </source>
</evidence>
<evidence type="ECO:0000305" key="12"/>
<evidence type="ECO:0000305" key="13">
    <source>
    </source>
</evidence>
<evidence type="ECO:0000305" key="14">
    <source>
    </source>
</evidence>
<evidence type="ECO:0000305" key="15">
    <source>
    </source>
</evidence>
<evidence type="ECO:0000305" key="16">
    <source>
    </source>
</evidence>
<evidence type="ECO:0007744" key="17">
    <source>
        <dbReference type="PDB" id="4QN9"/>
    </source>
</evidence>
<evidence type="ECO:0007744" key="18">
    <source>
    </source>
</evidence>
<evidence type="ECO:0007829" key="19">
    <source>
        <dbReference type="PDB" id="4QN9"/>
    </source>
</evidence>
<evidence type="ECO:0007829" key="20">
    <source>
        <dbReference type="PDB" id="8P90"/>
    </source>
</evidence>
<protein>
    <recommendedName>
        <fullName evidence="11">N-acyl-phosphatidylethanolamine-hydrolyzing phospholipase D</fullName>
        <shortName>N-acyl phosphatidylethanolamine phospholipase D</shortName>
        <shortName evidence="11">NAPE-PLD</shortName>
        <shortName>NAPE-hydrolyzing phospholipase D</shortName>
        <ecNumber evidence="4 6 8">3.1.4.54</ecNumber>
    </recommendedName>
</protein>